<dbReference type="EMBL" id="J02459">
    <property type="protein sequence ID" value="AAA96560.1"/>
    <property type="molecule type" value="Genomic_DNA"/>
</dbReference>
<dbReference type="PIR" id="F43009">
    <property type="entry name" value="ZEBP3L"/>
</dbReference>
<dbReference type="RefSeq" id="NP_040607.1">
    <property type="nucleotide sequence ID" value="NC_001416.1"/>
</dbReference>
<dbReference type="GeneID" id="2703536"/>
<dbReference type="KEGG" id="vg:3827052"/>
<dbReference type="Proteomes" id="UP000001711">
    <property type="component" value="Genome"/>
</dbReference>
<dbReference type="CDD" id="cd00085">
    <property type="entry name" value="HNHc"/>
    <property type="match status" value="1"/>
</dbReference>
<dbReference type="Gene3D" id="1.10.30.50">
    <property type="match status" value="1"/>
</dbReference>
<dbReference type="InterPro" id="IPR003615">
    <property type="entry name" value="HNH_nuc"/>
</dbReference>
<dbReference type="SMART" id="SM00507">
    <property type="entry name" value="HNHc"/>
    <property type="match status" value="1"/>
</dbReference>
<protein>
    <recommendedName>
        <fullName>Protein ea31</fullName>
    </recommendedName>
</protein>
<proteinExistence type="predicted"/>
<feature type="chain" id="PRO_0000077604" description="Protein ea31">
    <location>
        <begin position="1"/>
        <end position="296"/>
    </location>
</feature>
<organism>
    <name type="scientific">Escherichia phage lambda</name>
    <name type="common">Bacteriophage lambda</name>
    <dbReference type="NCBI Taxonomy" id="2681611"/>
    <lineage>
        <taxon>Viruses</taxon>
        <taxon>Duplodnaviria</taxon>
        <taxon>Heunggongvirae</taxon>
        <taxon>Uroviricota</taxon>
        <taxon>Caudoviricetes</taxon>
        <taxon>Lambdavirus</taxon>
        <taxon>Lambdavirus lambda</taxon>
    </lineage>
</organism>
<organismHost>
    <name type="scientific">Escherichia coli</name>
    <dbReference type="NCBI Taxonomy" id="562"/>
</organismHost>
<sequence length="296" mass="34584">MKKLPLPARTYSEMLNKCSEGMMQINVRNNFITHFPTFLQKEQQYRILSSTGQLFTYDRTHPLEPTTLVVGNLTKVKLEKLYENNLRDKNKPARTYYDDMLVSSGEKCPFCGDIGQTKNIDHFLPIAHYPEFSVMPINLVPSCRDCNMGEKGQVFAVDEVHQAIHPYIDKDIFFREQWVYANFVSGTPGAISFYVECPANWRQEDKHRALHHFKLLNIANRYRLEAGKHLSEVITQRNSFVKVIRKYSSTATFQQLQSEFIEANLKPIIDLNDFPNYWKRVMYQCLANSEDFFRGI</sequence>
<accession>P03753</accession>
<reference key="1">
    <citation type="journal article" date="1982" name="J. Mol. Biol.">
        <title>Nucleotide sequence of bacteriophage lambda DNA.</title>
        <authorList>
            <person name="Sanger F."/>
            <person name="Coulson A.R."/>
            <person name="Hong G.F."/>
            <person name="Hill D.F."/>
            <person name="Petersen G.B."/>
        </authorList>
    </citation>
    <scope>NUCLEOTIDE SEQUENCE [LARGE SCALE GENOMIC DNA]</scope>
</reference>
<gene>
    <name type="primary">ea31</name>
</gene>
<keyword id="KW-1185">Reference proteome</keyword>
<name>EA31_LAMBD</name>